<reference key="1">
    <citation type="journal article" date="1993" name="Cell">
        <title>Complementation cloning of an MHC class II transactivator mutated in hereditary MHC class II deficiency (or bare lymphocyte syndrome).</title>
        <authorList>
            <person name="Steimle V."/>
            <person name="Otten L.A."/>
            <person name="Zufferey M."/>
            <person name="Mach B."/>
        </authorList>
    </citation>
    <scope>NUCLEOTIDE SEQUENCE [MRNA] (ISOFORM 1)</scope>
    <scope>FUNCTION</scope>
    <scope>VARIANTS MHC2D1 LYS-120 DELINS ILE-GLU AND 940-THR--ALA-963 DEL</scope>
    <scope>VARIANTS ALA-500 AND ARG-900</scope>
</reference>
<reference key="2">
    <citation type="journal article" date="1995" name="Immunity">
        <title>Activation of class II MHC genes requires both the X box region and the class II transactivator (CIITA).</title>
        <authorList>
            <person name="Riley J.L."/>
            <person name="Westerheide S.D."/>
            <person name="Price J.A."/>
            <person name="Brown J.A."/>
            <person name="Boss J.M."/>
        </authorList>
    </citation>
    <scope>NUCLEOTIDE SEQUENCE [MRNA] (ISOFORMS 1 AND 2)</scope>
    <scope>FUNCTION</scope>
    <scope>VARIANT MHC2D1 LYS-120 DELINS ILE-GLU</scope>
    <scope>VARIANTS ALA-500 AND ARG-900</scope>
    <scope>ALTERNATIVE SPLICING</scope>
</reference>
<reference key="3">
    <citation type="journal article" date="2003" name="Eur. J. Immunogenet.">
        <title>Structural and functional characteristics of a dominant-negative isoform of porcine MHC class II transactivator.</title>
        <authorList>
            <person name="Quinn G."/>
            <person name="Bower R."/>
            <person name="Dos-Santos Cruz G."/>
            <person name="Giovino M."/>
            <person name="Xu Y."/>
            <person name="Patience C."/>
            <person name="Schuurman H.J."/>
        </authorList>
    </citation>
    <scope>NUCLEOTIDE SEQUENCE [MRNA] (ISOFORM 3)</scope>
    <scope>FUNCTION (ISOFORM 3)</scope>
    <scope>VARIANT ARG-900</scope>
    <scope>ALTERNATIVE SPLICING</scope>
</reference>
<reference key="4">
    <citation type="journal article" date="2003" name="Leuk. Res.">
        <title>K-562 cells lack MHC class II expression due to an alternatively spliced CIITA transcript with a truncated coding region.</title>
        <authorList>
            <person name="Day N.E."/>
            <person name="Ugai H."/>
            <person name="Yokoyama K.K."/>
            <person name="Ichiki A.T."/>
        </authorList>
    </citation>
    <scope>NUCLEOTIDE SEQUENCE [MRNA] (ISOFORM 4)</scope>
    <scope>VARIANT ALA-500</scope>
    <scope>ALTERNATIVE SPLICING</scope>
</reference>
<reference key="5">
    <citation type="submission" date="2006-10" db="EMBL/GenBank/DDBJ databases">
        <authorList>
            <person name="Livingston R.J."/>
            <person name="Shaffer T."/>
            <person name="McFarland I."/>
            <person name="Nguyen C.P."/>
            <person name="Stanaway I.B."/>
            <person name="Rajkumar N."/>
            <person name="Johnson E.J."/>
            <person name="da Ponte S.H."/>
            <person name="Willa H."/>
            <person name="Ahearn M.O."/>
            <person name="Bertucci C."/>
            <person name="Acklestad J."/>
            <person name="Carroll A."/>
            <person name="Swanson J."/>
            <person name="Gildersleeve H.I."/>
            <person name="Nickerson D.A."/>
        </authorList>
    </citation>
    <scope>NUCLEOTIDE SEQUENCE [GENOMIC DNA]</scope>
    <scope>VARIANT ARG-900</scope>
</reference>
<reference key="6">
    <citation type="journal article" date="2004" name="Nature">
        <title>The sequence and analysis of duplication-rich human chromosome 16.</title>
        <authorList>
            <person name="Martin J."/>
            <person name="Han C."/>
            <person name="Gordon L.A."/>
            <person name="Terry A."/>
            <person name="Prabhakar S."/>
            <person name="She X."/>
            <person name="Xie G."/>
            <person name="Hellsten U."/>
            <person name="Chan Y.M."/>
            <person name="Altherr M."/>
            <person name="Couronne O."/>
            <person name="Aerts A."/>
            <person name="Bajorek E."/>
            <person name="Black S."/>
            <person name="Blumer H."/>
            <person name="Branscomb E."/>
            <person name="Brown N.C."/>
            <person name="Bruno W.J."/>
            <person name="Buckingham J.M."/>
            <person name="Callen D.F."/>
            <person name="Campbell C.S."/>
            <person name="Campbell M.L."/>
            <person name="Campbell E.W."/>
            <person name="Caoile C."/>
            <person name="Challacombe J.F."/>
            <person name="Chasteen L.A."/>
            <person name="Chertkov O."/>
            <person name="Chi H.C."/>
            <person name="Christensen M."/>
            <person name="Clark L.M."/>
            <person name="Cohn J.D."/>
            <person name="Denys M."/>
            <person name="Detter J.C."/>
            <person name="Dickson M."/>
            <person name="Dimitrijevic-Bussod M."/>
            <person name="Escobar J."/>
            <person name="Fawcett J.J."/>
            <person name="Flowers D."/>
            <person name="Fotopulos D."/>
            <person name="Glavina T."/>
            <person name="Gomez M."/>
            <person name="Gonzales E."/>
            <person name="Goodstein D."/>
            <person name="Goodwin L.A."/>
            <person name="Grady D.L."/>
            <person name="Grigoriev I."/>
            <person name="Groza M."/>
            <person name="Hammon N."/>
            <person name="Hawkins T."/>
            <person name="Haydu L."/>
            <person name="Hildebrand C.E."/>
            <person name="Huang W."/>
            <person name="Israni S."/>
            <person name="Jett J."/>
            <person name="Jewett P.B."/>
            <person name="Kadner K."/>
            <person name="Kimball H."/>
            <person name="Kobayashi A."/>
            <person name="Krawczyk M.-C."/>
            <person name="Leyba T."/>
            <person name="Longmire J.L."/>
            <person name="Lopez F."/>
            <person name="Lou Y."/>
            <person name="Lowry S."/>
            <person name="Ludeman T."/>
            <person name="Manohar C.F."/>
            <person name="Mark G.A."/>
            <person name="McMurray K.L."/>
            <person name="Meincke L.J."/>
            <person name="Morgan J."/>
            <person name="Moyzis R.K."/>
            <person name="Mundt M.O."/>
            <person name="Munk A.C."/>
            <person name="Nandkeshwar R.D."/>
            <person name="Pitluck S."/>
            <person name="Pollard M."/>
            <person name="Predki P."/>
            <person name="Parson-Quintana B."/>
            <person name="Ramirez L."/>
            <person name="Rash S."/>
            <person name="Retterer J."/>
            <person name="Ricke D.O."/>
            <person name="Robinson D.L."/>
            <person name="Rodriguez A."/>
            <person name="Salamov A."/>
            <person name="Saunders E.H."/>
            <person name="Scott D."/>
            <person name="Shough T."/>
            <person name="Stallings R.L."/>
            <person name="Stalvey M."/>
            <person name="Sutherland R.D."/>
            <person name="Tapia R."/>
            <person name="Tesmer J.G."/>
            <person name="Thayer N."/>
            <person name="Thompson L.S."/>
            <person name="Tice H."/>
            <person name="Torney D.C."/>
            <person name="Tran-Gyamfi M."/>
            <person name="Tsai M."/>
            <person name="Ulanovsky L.E."/>
            <person name="Ustaszewska A."/>
            <person name="Vo N."/>
            <person name="White P.S."/>
            <person name="Williams A.L."/>
            <person name="Wills P.L."/>
            <person name="Wu J.-R."/>
            <person name="Wu K."/>
            <person name="Yang J."/>
            <person name="DeJong P."/>
            <person name="Bruce D."/>
            <person name="Doggett N.A."/>
            <person name="Deaven L."/>
            <person name="Schmutz J."/>
            <person name="Grimwood J."/>
            <person name="Richardson P."/>
            <person name="Rokhsar D.S."/>
            <person name="Eichler E.E."/>
            <person name="Gilna P."/>
            <person name="Lucas S.M."/>
            <person name="Myers R.M."/>
            <person name="Rubin E.M."/>
            <person name="Pennacchio L.A."/>
        </authorList>
    </citation>
    <scope>NUCLEOTIDE SEQUENCE [LARGE SCALE GENOMIC DNA]</scope>
</reference>
<reference key="7">
    <citation type="submission" date="2005-09" db="EMBL/GenBank/DDBJ databases">
        <authorList>
            <person name="Mural R.J."/>
            <person name="Istrail S."/>
            <person name="Sutton G.G."/>
            <person name="Florea L."/>
            <person name="Halpern A.L."/>
            <person name="Mobarry C.M."/>
            <person name="Lippert R."/>
            <person name="Walenz B."/>
            <person name="Shatkay H."/>
            <person name="Dew I."/>
            <person name="Miller J.R."/>
            <person name="Flanigan M.J."/>
            <person name="Edwards N.J."/>
            <person name="Bolanos R."/>
            <person name="Fasulo D."/>
            <person name="Halldorsson B.V."/>
            <person name="Hannenhalli S."/>
            <person name="Turner R."/>
            <person name="Yooseph S."/>
            <person name="Lu F."/>
            <person name="Nusskern D.R."/>
            <person name="Shue B.C."/>
            <person name="Zheng X.H."/>
            <person name="Zhong F."/>
            <person name="Delcher A.L."/>
            <person name="Huson D.H."/>
            <person name="Kravitz S.A."/>
            <person name="Mouchard L."/>
            <person name="Reinert K."/>
            <person name="Remington K.A."/>
            <person name="Clark A.G."/>
            <person name="Waterman M.S."/>
            <person name="Eichler E.E."/>
            <person name="Adams M.D."/>
            <person name="Hunkapiller M.W."/>
            <person name="Myers E.W."/>
            <person name="Venter J.C."/>
        </authorList>
    </citation>
    <scope>NUCLEOTIDE SEQUENCE [LARGE SCALE GENOMIC DNA]</scope>
    <scope>VARIANT ARG-900</scope>
</reference>
<reference key="8">
    <citation type="journal article" date="1999" name="Science">
        <title>GTP binding by class II transactivator: role in nuclear import.</title>
        <authorList>
            <person name="Harton J.A."/>
            <person name="Cressman D.E."/>
            <person name="Chin K.C."/>
            <person name="Der C.J."/>
            <person name="Ting J.P."/>
        </authorList>
    </citation>
    <scope>GTP-BINDING</scope>
    <scope>MUTAGENESIS OF 420-GLY-LYS-421 AND ASP-561</scope>
</reference>
<reference key="9">
    <citation type="journal article" date="2001" name="Mol. Cell">
        <title>Transcriptional coactivator, CIITA, is an acetyltransferase that bypasses a promoter requirement for TAF(II)250.</title>
        <authorList>
            <person name="Raval A."/>
            <person name="Howcroft T.K."/>
            <person name="Weissman J.D."/>
            <person name="Kirshner S."/>
            <person name="Zhu X.S."/>
            <person name="Yokoyama K."/>
            <person name="Ting J."/>
            <person name="Singer D.S."/>
        </authorList>
    </citation>
    <scope>FUNCTION AS ACETYLTRANSFERASE</scope>
    <scope>SUBCELLULAR LOCATION</scope>
    <scope>GTP-BINDING</scope>
    <scope>ACETYLTRANSFERASE REGION</scope>
</reference>
<reference key="10">
    <citation type="journal article" date="2007" name="J. Mol. Biol.">
        <title>The zinc finger proteins ZXDA and ZXDC form a complex that binds CIITA and regulates MHC II gene transcription.</title>
        <authorList>
            <person name="Al-Kandari W."/>
            <person name="Koneni R."/>
            <person name="Navalgund V."/>
            <person name="Aleksandrova A."/>
            <person name="Jambunathan S."/>
            <person name="Fontes J.D."/>
        </authorList>
    </citation>
    <scope>FUNCTION</scope>
    <scope>INTERACTION WITH ZXDA AND ZXDC</scope>
</reference>
<reference key="11">
    <citation type="journal article" date="2007" name="Mol. Immunol.">
        <title>ZXDC, a novel zinc finger protein that binds CIITA and activates MHC gene transcription.</title>
        <authorList>
            <person name="Al-Kandari W."/>
            <person name="Jambunathan S."/>
            <person name="Navalgund V."/>
            <person name="Koneni R."/>
            <person name="Freer M."/>
            <person name="Parimi N."/>
            <person name="Mudhasani R."/>
            <person name="Fontes J.D."/>
        </authorList>
    </citation>
    <scope>FUNCTION</scope>
    <scope>INTERACTION WITH ZXDC</scope>
</reference>
<reference key="12">
    <citation type="journal article" date="2010" name="J. Biol. Chem.">
        <title>Novel functions for TAF7, a regulator of TAF1-independent transcription.</title>
        <authorList>
            <person name="Devaiah B.N."/>
            <person name="Lu H."/>
            <person name="Gegonne A."/>
            <person name="Sercan Z."/>
            <person name="Zhang H."/>
            <person name="Clifford R.J."/>
            <person name="Lee M.P."/>
            <person name="Singer D.S."/>
        </authorList>
    </citation>
    <scope>INTERACTION WITH TAF7</scope>
</reference>
<reference key="13">
    <citation type="journal article" date="2012" name="J. Cell Biol.">
        <title>PML promotes MHC class II gene expression by stabilizing the class II transactivator.</title>
        <authorList>
            <person name="Ulbricht T."/>
            <person name="Alzrigat M."/>
            <person name="Horch A."/>
            <person name="Reuter N."/>
            <person name="von Mikecz A."/>
            <person name="Steimle V."/>
            <person name="Schmitt E."/>
            <person name="Kraemer O.H."/>
            <person name="Stamminger T."/>
            <person name="Hemmerich P."/>
        </authorList>
    </citation>
    <scope>SUBCELLULAR LOCATION</scope>
    <scope>INTERACTION WITH PML</scope>
</reference>
<reference key="14">
    <citation type="journal article" date="2013" name="Biochim. Biophys. Acta">
        <title>Transcriptional coactivator CIITA, a functional homolog of TAF1, has kinase activity.</title>
        <authorList>
            <person name="Soe K.C."/>
            <person name="Devaiah B.N."/>
            <person name="Singer D.S."/>
        </authorList>
    </citation>
    <scope>FUNCTION AS KINASE</scope>
    <scope>CATALYTIC ACTIVITY</scope>
    <scope>AUTOPHOSPHORYLATION</scope>
</reference>
<reference key="15">
    <citation type="journal article" date="2020" name="Science">
        <title>MHC class II transactivator CIITA induces cell resistance to Ebola virus and SARS-like coronaviruses.</title>
        <authorList>
            <person name="Bruchez A."/>
            <person name="Sha K."/>
            <person name="Johnson J."/>
            <person name="Chen L."/>
            <person name="Stefani C."/>
            <person name="McConnell H."/>
            <person name="Gaucherand L."/>
            <person name="Prins R."/>
            <person name="Matreyek K.A."/>
            <person name="Hume A.J."/>
            <person name="Muehlberger E."/>
            <person name="Schmidt E.V."/>
            <person name="Olinger G.G."/>
            <person name="Stuart L.M."/>
            <person name="Lacy-Hulbert A."/>
        </authorList>
    </citation>
    <scope>FUNCTION</scope>
</reference>
<reference key="16">
    <citation type="journal article" date="1999" name="Immunogenetics">
        <title>Absence of MHC class II gene expression in a patient with a single amino acid substitution in the class II transactivator protein CIITA.</title>
        <authorList>
            <person name="Quan V."/>
            <person name="Towey M."/>
            <person name="Sacks S."/>
            <person name="Kelly A.P."/>
        </authorList>
    </citation>
    <scope>VARIANT MHC2D1 SER-962</scope>
    <scope>INVOLVEMENT IN MHC2D1</scope>
</reference>
<reference key="17">
    <citation type="journal article" date="2001" name="J. Immunol.">
        <title>Mutation in the class II trans-activator leading to a mild immunodeficiency.</title>
        <authorList>
            <person name="Wiszniewski W."/>
            <person name="Fondaneche M.-C."/>
            <person name="Le Deist F."/>
            <person name="Kanariou M."/>
            <person name="Selz F."/>
            <person name="Brousse N."/>
            <person name="Steimle V."/>
            <person name="Barbieri G."/>
            <person name="Alcaide-Loridan C."/>
            <person name="Charron D."/>
            <person name="Fischer A."/>
            <person name="Lisowska-Grospierre B."/>
        </authorList>
    </citation>
    <scope>VARIANT MHC2D1 PRO-469</scope>
    <scope>INVOLVEMENT IN MHC2D1</scope>
</reference>
<reference key="18">
    <citation type="journal article" date="2002" name="J. Immunol.">
        <authorList>
            <person name="Wiszniewski W."/>
            <person name="Fondaneche M.-C."/>
            <person name="Le Deist F."/>
            <person name="Kanariou M."/>
            <person name="Selz F."/>
            <person name="Brousse N."/>
            <person name="Steimle V."/>
            <person name="Barbieri G."/>
            <person name="Alcaide-Loridan C."/>
            <person name="Charron D."/>
            <person name="Fischer A."/>
            <person name="Lisowska-Grospierre B."/>
        </authorList>
    </citation>
    <scope>ERRATUM OF PUBMED:11466404</scope>
</reference>
<reference key="19">
    <citation type="journal article" date="2002" name="Immunogenetics">
        <title>Three novel mutations of the CIITA gene in MHC class II-deficient patients with a severe immunodeficiency.</title>
        <authorList>
            <person name="Dziembowska M."/>
            <person name="Fondaneche M.-C."/>
            <person name="Vedrenne J."/>
            <person name="Barbieri G."/>
            <person name="Wiszniewski W."/>
            <person name="Picard C."/>
            <person name="Cant A.J."/>
            <person name="Steimle V."/>
            <person name="Charron D."/>
            <person name="Alcaide-Loridan C."/>
            <person name="Fischer A."/>
            <person name="Lisowska-Grospierre B."/>
        </authorList>
    </citation>
    <scope>VARIANTS MHC2D1 964-LEU--ASP-991 DEL AND ILE-1027 DEL</scope>
</reference>
<keyword id="KW-0010">Activator</keyword>
<keyword id="KW-0012">Acyltransferase</keyword>
<keyword id="KW-0025">Alternative splicing</keyword>
<keyword id="KW-0067">ATP-binding</keyword>
<keyword id="KW-0225">Disease variant</keyword>
<keyword id="KW-0342">GTP-binding</keyword>
<keyword id="KW-0418">Kinase</keyword>
<keyword id="KW-0433">Leucine-rich repeat</keyword>
<keyword id="KW-0547">Nucleotide-binding</keyword>
<keyword id="KW-0539">Nucleus</keyword>
<keyword id="KW-0597">Phosphoprotein</keyword>
<keyword id="KW-1267">Proteomics identification</keyword>
<keyword id="KW-1185">Reference proteome</keyword>
<keyword id="KW-0677">Repeat</keyword>
<keyword id="KW-0705">SCID</keyword>
<keyword id="KW-0804">Transcription</keyword>
<keyword id="KW-0805">Transcription regulation</keyword>
<keyword id="KW-0808">Transferase</keyword>
<comment type="function">
    <text evidence="5 10 11 14 15 16 17">Essential for transcriptional activity of the HLA class II promoter; activation is via the proximal promoter (PubMed:16600381, PubMed:17493635, PubMed:7749984, PubMed:8402893). Does not bind DNA (PubMed:16600381, PubMed:17493635, PubMed:7749984, PubMed:8402893). May act in a coactivator-like fashion through protein-protein interactions by contacting factors binding to the proximal MHC class II promoter, to elements of the transcription machinery, or both PubMed:8402893, PubMed:7749984, (PubMed:16600381, PubMed:17493635). Alternatively it may activate HLA class II transcription by modifying proteins that bind to the MHC class II promoter (PubMed:16600381, PubMed:17493635, PubMed:7749984, PubMed:8402893). Also mediates enhanced MHC class I transcription; the promoter element requirements for CIITA-mediated transcription are distinct from those of constitutive MHC class I transcription, and CIITA can functionally replace TAF1 at these genes. Activates CD74 transcription (PubMed:32855215). Exhibits intrinsic GTP-stimulated acetyltransferase activity (PubMed:11172716). Exhibits serine/threonine protein kinase activity: can phosphorylate the TFIID component TAF7, the RAP74 subunit of the general transcription factor TFIIF, histone H2B at 'Ser-37' and other histones (in vitro) (PubMed:24036077). Has antiviral activity against Ebola virus and coronaviruses, including SARS-CoV-2 (PubMed:32855215). Induces resistance by up-regulation of the p41 isoform of CD74, which blocks cathepsin-mediated cleavage of viral glycoproteins, thereby preventing viral fusion (PubMed:32855215).</text>
</comment>
<comment type="function">
    <molecule>Isoform 3</molecule>
    <text evidence="9">Exhibits dominant-negative suppression of MHC class II gene expression.</text>
</comment>
<comment type="catalytic activity">
    <reaction evidence="14">
        <text>L-seryl-[protein] + ATP = O-phospho-L-seryl-[protein] + ADP + H(+)</text>
        <dbReference type="Rhea" id="RHEA:17989"/>
        <dbReference type="Rhea" id="RHEA-COMP:9863"/>
        <dbReference type="Rhea" id="RHEA-COMP:11604"/>
        <dbReference type="ChEBI" id="CHEBI:15378"/>
        <dbReference type="ChEBI" id="CHEBI:29999"/>
        <dbReference type="ChEBI" id="CHEBI:30616"/>
        <dbReference type="ChEBI" id="CHEBI:83421"/>
        <dbReference type="ChEBI" id="CHEBI:456216"/>
        <dbReference type="EC" id="2.7.11.1"/>
    </reaction>
</comment>
<comment type="catalytic activity">
    <reaction evidence="14">
        <text>L-threonyl-[protein] + ATP = O-phospho-L-threonyl-[protein] + ADP + H(+)</text>
        <dbReference type="Rhea" id="RHEA:46608"/>
        <dbReference type="Rhea" id="RHEA-COMP:11060"/>
        <dbReference type="Rhea" id="RHEA-COMP:11605"/>
        <dbReference type="ChEBI" id="CHEBI:15378"/>
        <dbReference type="ChEBI" id="CHEBI:30013"/>
        <dbReference type="ChEBI" id="CHEBI:30616"/>
        <dbReference type="ChEBI" id="CHEBI:61977"/>
        <dbReference type="ChEBI" id="CHEBI:456216"/>
        <dbReference type="EC" id="2.7.11.1"/>
    </reaction>
</comment>
<comment type="subunit">
    <text evidence="11 12 13">Interacts with ZXDA and ZXDC (PubMed:17493635). Interacts with PML (isoform PML-2) (PubMed:23007646). Interacts with TAF7; interaction inhibits CIITA acetyltransferase activity, thereby repressing transcription (PubMed:20937824).</text>
</comment>
<comment type="interaction">
    <interactant intactId="EBI-1538819">
        <id>P33076</id>
    </interactant>
    <interactant intactId="EBI-923266">
        <id>P48382</id>
        <label>RFX5</label>
    </interactant>
    <organismsDiffer>false</organismsDiffer>
    <experiments>2</experiments>
</comment>
<comment type="interaction">
    <interactant intactId="EBI-1538819">
        <id>P33076</id>
    </interactant>
    <interactant intactId="EBI-1802965">
        <id>Q96EB6</id>
        <label>SIRT1</label>
    </interactant>
    <organismsDiffer>false</organismsDiffer>
    <experiments>4</experiments>
</comment>
<comment type="interaction">
    <interactant intactId="EBI-1538819">
        <id>P33076</id>
    </interactant>
    <interactant intactId="EBI-1538980">
        <id>P98168</id>
        <label>ZXDA</label>
    </interactant>
    <organismsDiffer>false</organismsDiffer>
    <experiments>4</experiments>
</comment>
<comment type="interaction">
    <interactant intactId="EBI-1538819">
        <id>P33076</id>
    </interactant>
    <interactant intactId="EBI-1538838">
        <id>Q2QGD7</id>
        <label>ZXDC</label>
    </interactant>
    <organismsDiffer>false</organismsDiffer>
    <experiments>6</experiments>
</comment>
<comment type="subcellular location">
    <subcellularLocation>
        <location evidence="5 13">Nucleus</location>
    </subcellularLocation>
    <subcellularLocation>
        <location evidence="13">Nucleus</location>
        <location evidence="13">PML body</location>
    </subcellularLocation>
    <text evidence="13">Recruited to PML body by PML.</text>
</comment>
<comment type="alternative products">
    <event type="alternative splicing"/>
    <isoform>
        <id>P33076-1</id>
        <name>1</name>
        <sequence type="displayed"/>
    </isoform>
    <isoform>
        <id>P33076-2</id>
        <name>2</name>
        <sequence type="described" ref="VSP_055099 VSP_055102 VSP_055103"/>
    </isoform>
    <isoform>
        <id>P33076-3</id>
        <name>3</name>
        <name>hCIITA'</name>
        <sequence type="described" ref="VSP_055099 VSP_055100 VSP_055101"/>
    </isoform>
    <isoform>
        <id>P33076-4</id>
        <name>4</name>
        <sequence type="described" ref="VSP_055102 VSP_055103"/>
    </isoform>
</comment>
<comment type="domain">
    <text evidence="5">The acetyltransferase domain is necessary for activation of both class I and class II transcription.</text>
</comment>
<comment type="domain">
    <text evidence="5">The GTP-binding motif doesn't confer GTPase activity but promotes nuclear localization.</text>
</comment>
<comment type="PTM">
    <text evidence="14">Autophosphorylated, affecting interaction with TAF7.</text>
</comment>
<comment type="disease" evidence="4 6 7 16 17">
    <disease id="DI-00171">
        <name>MHC class II deficiency 1</name>
        <acronym>MHC2D1</acronym>
        <description>An autosomal recessive immunologic disorder characterized by the loss of expression of MHC class II antigens on antigen-presenting cells. Affected individuals present in early infancy with severe recurrent bacterial, viral, fungal and parasitic infections, usually affecting the gastrointestinal and respiratory tracts.</description>
        <dbReference type="MIM" id="209920"/>
    </disease>
    <text>The disease is caused by variants affecting the gene represented in this entry.</text>
</comment>
<comment type="online information" name="CIITAbase">
    <link uri="https://databases.lovd.nl/shared/genes/CIITA"/>
    <text>CIITA mutation db</text>
</comment>
<comment type="online information" name="Atlas of Genetics and Cytogenetics in Oncology and Haematology">
    <link uri="https://atlasgeneticsoncology.org/gene/260/MHC2TA"/>
</comment>
<feature type="chain" id="PRO_0000089241" description="MHC class II transactivator">
    <location>
        <begin position="1"/>
        <end position="1130"/>
    </location>
</feature>
<feature type="domain" description="NACHT" evidence="1">
    <location>
        <begin position="414"/>
        <end position="724"/>
    </location>
</feature>
<feature type="repeat" description="LRR 1">
    <location>
        <begin position="985"/>
        <end position="1008"/>
    </location>
</feature>
<feature type="repeat" description="LRR 2">
    <location>
        <begin position="1016"/>
        <end position="1037"/>
    </location>
</feature>
<feature type="repeat" description="LRR 3">
    <location>
        <begin position="1045"/>
        <end position="1066"/>
    </location>
</feature>
<feature type="repeat" description="LRR 4">
    <location>
        <begin position="1073"/>
        <end position="1093"/>
    </location>
</feature>
<feature type="region of interest" description="Required for acetyltransferase activity" evidence="5">
    <location>
        <begin position="94"/>
        <end position="132"/>
    </location>
</feature>
<feature type="region of interest" description="Disordered" evidence="2">
    <location>
        <begin position="269"/>
        <end position="303"/>
    </location>
</feature>
<feature type="binding site" evidence="5">
    <location>
        <begin position="420"/>
        <end position="427"/>
    </location>
    <ligand>
        <name>GTP</name>
        <dbReference type="ChEBI" id="CHEBI:37565"/>
    </ligand>
</feature>
<feature type="splice variant" id="VSP_055099" description="In isoform 2 and isoform 3." evidence="20 21">
    <original>AEPPTVVTGSLLVGPVSDCSTLPCLPLPALFNQEPASGQMRLEKTDQIPM</original>
    <variation>V</variation>
    <location>
        <begin position="161"/>
        <end position="210"/>
    </location>
</feature>
<feature type="splice variant" id="VSP_055100" description="In isoform 3." evidence="20">
    <original>EPVEQFYRSLQDTYG</original>
    <variation>GLAWSPCLGLRPSLH</variation>
    <location>
        <begin position="336"/>
        <end position="350"/>
    </location>
</feature>
<feature type="splice variant" id="VSP_055101" description="In isoform 3." evidence="20">
    <location>
        <begin position="351"/>
        <end position="885"/>
    </location>
</feature>
<feature type="splice variant" id="VSP_055102" description="In isoform 2 and isoform 4." evidence="19 21">
    <original>AALSDTVALWESLQQHGETKLLQAAEEKFTIEPFKAKSLKDVED</original>
    <variation>WGEGLGRDILVLGINCGLGAKPSALWGPFSMQSSRVGQNGFSPF</variation>
    <location>
        <begin position="887"/>
        <end position="930"/>
    </location>
</feature>
<feature type="splice variant" id="VSP_055103" description="In isoform 2 and isoform 4." evidence="19 21">
    <location>
        <begin position="931"/>
        <end position="1128"/>
    </location>
</feature>
<feature type="sequence variant" id="VAR_029270" description="In dbSNP:rs2229317.">
    <original>L</original>
    <variation>V</variation>
    <location>
        <position position="45"/>
    </location>
</feature>
<feature type="sequence variant" id="VAR_005127" description="In MHC2D1." evidence="16 17">
    <original>K</original>
    <variation>IE</variation>
    <location>
        <position position="120"/>
    </location>
</feature>
<feature type="sequence variant" id="VAR_047907" description="In dbSNP:rs8046121.">
    <original>G</original>
    <variation>R</variation>
    <location>
        <position position="174"/>
    </location>
</feature>
<feature type="sequence variant" id="VAR_015551" description="In MHC2D1; mild immunodeficiency; has residual MHC class II trans activation activity." evidence="6">
    <original>L</original>
    <variation>P</variation>
    <location>
        <position position="469"/>
    </location>
</feature>
<feature type="sequence variant" id="VAR_005128" description="In dbSNP:rs4774." evidence="8 16 17">
    <original>G</original>
    <variation>A</variation>
    <location>
        <position position="500"/>
    </location>
</feature>
<feature type="sequence variant" id="VAR_015552" description="In dbSNP:rs2229319.">
    <original>A</original>
    <variation>G</variation>
    <location>
        <position position="658"/>
    </location>
</feature>
<feature type="sequence variant" id="VAR_060104" description="In dbSNP:rs13330686.">
    <original>S</original>
    <variation>L</variation>
    <location>
        <position position="781"/>
    </location>
</feature>
<feature type="sequence variant" id="VAR_057711" description="In dbSNP:rs13336804.">
    <original>V</original>
    <variation>A</variation>
    <location>
        <position position="782"/>
    </location>
</feature>
<feature type="sequence variant" id="VAR_047908" description="In dbSNP:rs7197779." evidence="9 16 17 18">
    <original>Q</original>
    <variation>R</variation>
    <location>
        <position position="900"/>
    </location>
</feature>
<feature type="sequence variant" id="VAR_005129" description="In MHC2D1." evidence="17">
    <location>
        <begin position="940"/>
        <end position="963"/>
    </location>
</feature>
<feature type="sequence variant" id="VAR_015553" description="In MHC2D1." evidence="4">
    <original>F</original>
    <variation>S</variation>
    <location>
        <position position="962"/>
    </location>
</feature>
<feature type="sequence variant" id="VAR_015554" description="In MHC2D1.">
    <location>
        <begin position="964"/>
        <end position="991"/>
    </location>
</feature>
<feature type="sequence variant" id="VAR_015555" description="In MHC2D1." evidence="7">
    <location>
        <position position="1027"/>
    </location>
</feature>
<feature type="mutagenesis site" description="Strongly reduces GTP-binding and abolishes transactivation at MHC promoters." evidence="3">
    <location>
        <begin position="420"/>
        <end position="421"/>
    </location>
</feature>
<feature type="mutagenesis site" description="Strongly reduces GTP-binding and abolishes transactivation at MHC promoters." evidence="3">
    <original>D</original>
    <variation>A</variation>
    <location>
        <position position="561"/>
    </location>
</feature>
<feature type="sequence conflict" description="In Ref. 4; ABK41930." evidence="22" ref="4">
    <original>LN</original>
    <variation>RS</variation>
    <location>
        <begin position="1020"/>
        <end position="1021"/>
    </location>
</feature>
<name>C2TA_HUMAN</name>
<protein>
    <recommendedName>
        <fullName evidence="22">MHC class II transactivator</fullName>
        <shortName evidence="22">CIITA</shortName>
        <ecNumber evidence="5">2.3.1.-</ecNumber>
        <ecNumber evidence="14">2.7.11.1</ecNumber>
    </recommendedName>
</protein>
<dbReference type="EC" id="2.3.1.-" evidence="5"/>
<dbReference type="EC" id="2.7.11.1" evidence="14"/>
<dbReference type="EMBL" id="X74301">
    <property type="protein sequence ID" value="CAA52354.1"/>
    <property type="molecule type" value="mRNA"/>
</dbReference>
<dbReference type="EMBL" id="U18259">
    <property type="protein sequence ID" value="AAA88861.1"/>
    <property type="molecule type" value="mRNA"/>
</dbReference>
<dbReference type="EMBL" id="U18288">
    <property type="protein sequence ID" value="AAA88862.1"/>
    <property type="molecule type" value="mRNA"/>
</dbReference>
<dbReference type="EMBL" id="AY084054">
    <property type="protein sequence ID" value="AAM15723.1"/>
    <property type="molecule type" value="mRNA"/>
</dbReference>
<dbReference type="EMBL" id="AF410154">
    <property type="protein sequence ID" value="AAL04118.1"/>
    <property type="molecule type" value="mRNA"/>
</dbReference>
<dbReference type="EMBL" id="EF064747">
    <property type="protein sequence ID" value="ABK41930.1"/>
    <property type="molecule type" value="Genomic_DNA"/>
</dbReference>
<dbReference type="EMBL" id="AC133065">
    <property type="status" value="NOT_ANNOTATED_CDS"/>
    <property type="molecule type" value="Genomic_DNA"/>
</dbReference>
<dbReference type="EMBL" id="KF459560">
    <property type="status" value="NOT_ANNOTATED_CDS"/>
    <property type="molecule type" value="Genomic_DNA"/>
</dbReference>
<dbReference type="EMBL" id="CH471112">
    <property type="protein sequence ID" value="EAW85169.1"/>
    <property type="molecule type" value="Genomic_DNA"/>
</dbReference>
<dbReference type="EMBL" id="CH471112">
    <property type="protein sequence ID" value="EAW85172.1"/>
    <property type="molecule type" value="Genomic_DNA"/>
</dbReference>
<dbReference type="EMBL" id="CH471112">
    <property type="protein sequence ID" value="EAW85173.1"/>
    <property type="molecule type" value="Genomic_DNA"/>
</dbReference>
<dbReference type="CCDS" id="CCDS10544.1">
    <molecule id="P33076-1"/>
</dbReference>
<dbReference type="CCDS" id="CCDS66943.1">
    <molecule id="P33076-3"/>
</dbReference>
<dbReference type="PIR" id="A48843">
    <property type="entry name" value="A48843"/>
</dbReference>
<dbReference type="RefSeq" id="NP_000237.2">
    <property type="nucleotide sequence ID" value="NM_000246.3"/>
</dbReference>
<dbReference type="RefSeq" id="NP_001273332.1">
    <molecule id="P33076-3"/>
    <property type="nucleotide sequence ID" value="NM_001286403.2"/>
</dbReference>
<dbReference type="SMR" id="P33076"/>
<dbReference type="BioGRID" id="110416">
    <property type="interactions" value="39"/>
</dbReference>
<dbReference type="ELM" id="P33076"/>
<dbReference type="FunCoup" id="P33076">
    <property type="interactions" value="1367"/>
</dbReference>
<dbReference type="IntAct" id="P33076">
    <property type="interactions" value="4"/>
</dbReference>
<dbReference type="STRING" id="9606.ENSP00000485010"/>
<dbReference type="GlyGen" id="P33076">
    <property type="glycosylation" value="5 sites, 1 O-linked glycan (5 sites)"/>
</dbReference>
<dbReference type="iPTMnet" id="P33076"/>
<dbReference type="PhosphoSitePlus" id="P33076"/>
<dbReference type="BioMuta" id="CIITA"/>
<dbReference type="DMDM" id="317373472"/>
<dbReference type="jPOST" id="P33076"/>
<dbReference type="MassIVE" id="P33076"/>
<dbReference type="PaxDb" id="9606-ENSP00000485010"/>
<dbReference type="PeptideAtlas" id="P33076"/>
<dbReference type="ProteomicsDB" id="20081"/>
<dbReference type="ProteomicsDB" id="54897">
    <molecule id="P33076-1"/>
</dbReference>
<dbReference type="Antibodypedia" id="4234">
    <property type="antibodies" value="184 antibodies from 36 providers"/>
</dbReference>
<dbReference type="DNASU" id="4261"/>
<dbReference type="Ensembl" id="ENST00000381835.9">
    <molecule id="P33076-3"/>
    <property type="protein sequence ID" value="ENSP00000371257.5"/>
    <property type="gene ID" value="ENSG00000179583.21"/>
</dbReference>
<dbReference type="GeneID" id="4261"/>
<dbReference type="KEGG" id="hsa:4261"/>
<dbReference type="MANE-Select" id="ENST00000324288.14">
    <property type="protein sequence ID" value="ENSP00000316328.8"/>
    <property type="RefSeq nucleotide sequence ID" value="NM_000246.4"/>
    <property type="RefSeq protein sequence ID" value="NP_000237.2"/>
</dbReference>
<dbReference type="UCSC" id="uc002dak.5">
    <molecule id="P33076-1"/>
    <property type="organism name" value="human"/>
</dbReference>
<dbReference type="AGR" id="HGNC:7067"/>
<dbReference type="CTD" id="4261"/>
<dbReference type="DisGeNET" id="4261"/>
<dbReference type="GeneCards" id="CIITA"/>
<dbReference type="HGNC" id="HGNC:7067">
    <property type="gene designation" value="CIITA"/>
</dbReference>
<dbReference type="HPA" id="ENSG00000179583">
    <property type="expression patterns" value="Tissue enhanced (lymphoid)"/>
</dbReference>
<dbReference type="MalaCards" id="CIITA"/>
<dbReference type="MIM" id="209920">
    <property type="type" value="phenotype"/>
</dbReference>
<dbReference type="MIM" id="600005">
    <property type="type" value="gene"/>
</dbReference>
<dbReference type="neXtProt" id="NX_P33076"/>
<dbReference type="OpenTargets" id="ENSG00000179583"/>
<dbReference type="Orphanet" id="572">
    <property type="disease" value="Immunodeficiency by defective expression of MHC class II"/>
</dbReference>
<dbReference type="PharmGKB" id="PA30795"/>
<dbReference type="VEuPathDB" id="HostDB:ENSG00000179583"/>
<dbReference type="eggNOG" id="KOG4308">
    <property type="taxonomic scope" value="Eukaryota"/>
</dbReference>
<dbReference type="GeneTree" id="ENSGT00940000161578"/>
<dbReference type="HOGENOM" id="CLU_498699_0_0_1"/>
<dbReference type="InParanoid" id="P33076"/>
<dbReference type="OrthoDB" id="120976at2759"/>
<dbReference type="PAN-GO" id="P33076">
    <property type="GO annotations" value="4 GO annotations based on evolutionary models"/>
</dbReference>
<dbReference type="PhylomeDB" id="P33076"/>
<dbReference type="TreeFam" id="TF352118"/>
<dbReference type="PathwayCommons" id="P33076"/>
<dbReference type="Reactome" id="R-HSA-877300">
    <property type="pathway name" value="Interferon gamma signaling"/>
</dbReference>
<dbReference type="SignaLink" id="P33076"/>
<dbReference type="SIGNOR" id="P33076"/>
<dbReference type="BioGRID-ORCS" id="4261">
    <property type="hits" value="17 hits in 1148 CRISPR screens"/>
</dbReference>
<dbReference type="CD-CODE" id="B5B9A610">
    <property type="entry name" value="PML body"/>
</dbReference>
<dbReference type="ChiTaRS" id="CIITA">
    <property type="organism name" value="human"/>
</dbReference>
<dbReference type="GeneWiki" id="CIITA"/>
<dbReference type="GenomeRNAi" id="4261"/>
<dbReference type="Pharos" id="P33076">
    <property type="development level" value="Tbio"/>
</dbReference>
<dbReference type="PRO" id="PR:P33076"/>
<dbReference type="Proteomes" id="UP000005640">
    <property type="component" value="Chromosome 16"/>
</dbReference>
<dbReference type="RNAct" id="P33076">
    <property type="molecule type" value="protein"/>
</dbReference>
<dbReference type="Bgee" id="ENSG00000179583">
    <property type="expression patterns" value="Expressed in monocyte and 129 other cell types or tissues"/>
</dbReference>
<dbReference type="ExpressionAtlas" id="P33076">
    <property type="expression patterns" value="baseline and differential"/>
</dbReference>
<dbReference type="GO" id="GO:0005829">
    <property type="term" value="C:cytosol"/>
    <property type="evidence" value="ECO:0000314"/>
    <property type="project" value="HPA"/>
</dbReference>
<dbReference type="GO" id="GO:0005654">
    <property type="term" value="C:nucleoplasm"/>
    <property type="evidence" value="ECO:0000314"/>
    <property type="project" value="HPA"/>
</dbReference>
<dbReference type="GO" id="GO:0016605">
    <property type="term" value="C:PML body"/>
    <property type="evidence" value="ECO:0000314"/>
    <property type="project" value="UniProtKB"/>
</dbReference>
<dbReference type="GO" id="GO:0016746">
    <property type="term" value="F:acyltransferase activity"/>
    <property type="evidence" value="ECO:0007669"/>
    <property type="project" value="UniProtKB-KW"/>
</dbReference>
<dbReference type="GO" id="GO:0005524">
    <property type="term" value="F:ATP binding"/>
    <property type="evidence" value="ECO:0007669"/>
    <property type="project" value="UniProtKB-KW"/>
</dbReference>
<dbReference type="GO" id="GO:0140297">
    <property type="term" value="F:DNA-binding transcription factor binding"/>
    <property type="evidence" value="ECO:0000353"/>
    <property type="project" value="BHF-UCL"/>
</dbReference>
<dbReference type="GO" id="GO:0005525">
    <property type="term" value="F:GTP binding"/>
    <property type="evidence" value="ECO:0007669"/>
    <property type="project" value="UniProtKB-KW"/>
</dbReference>
<dbReference type="GO" id="GO:0042826">
    <property type="term" value="F:histone deacetylase binding"/>
    <property type="evidence" value="ECO:0000353"/>
    <property type="project" value="BHF-UCL"/>
</dbReference>
<dbReference type="GO" id="GO:0106310">
    <property type="term" value="F:protein serine kinase activity"/>
    <property type="evidence" value="ECO:0007669"/>
    <property type="project" value="RHEA"/>
</dbReference>
<dbReference type="GO" id="GO:0004674">
    <property type="term" value="F:protein serine/threonine kinase activity"/>
    <property type="evidence" value="ECO:0007669"/>
    <property type="project" value="UniProtKB-EC"/>
</dbReference>
<dbReference type="GO" id="GO:0044877">
    <property type="term" value="F:protein-containing complex binding"/>
    <property type="evidence" value="ECO:0000314"/>
    <property type="project" value="UniProtKB"/>
</dbReference>
<dbReference type="GO" id="GO:0061629">
    <property type="term" value="F:RNA polymerase II-specific DNA-binding transcription factor binding"/>
    <property type="evidence" value="ECO:0000353"/>
    <property type="project" value="BHF-UCL"/>
</dbReference>
<dbReference type="GO" id="GO:0003713">
    <property type="term" value="F:transcription coactivator activity"/>
    <property type="evidence" value="ECO:0000314"/>
    <property type="project" value="BHF-UCL"/>
</dbReference>
<dbReference type="GO" id="GO:0003714">
    <property type="term" value="F:transcription corepressor activity"/>
    <property type="evidence" value="ECO:0000314"/>
    <property type="project" value="BHF-UCL"/>
</dbReference>
<dbReference type="GO" id="GO:0046597">
    <property type="term" value="P:host-mediated suppression of symbiont invasion"/>
    <property type="evidence" value="ECO:0000314"/>
    <property type="project" value="UniProtKB"/>
</dbReference>
<dbReference type="GO" id="GO:0006955">
    <property type="term" value="P:immune response"/>
    <property type="evidence" value="ECO:0000304"/>
    <property type="project" value="ProtInc"/>
</dbReference>
<dbReference type="GO" id="GO:0032966">
    <property type="term" value="P:negative regulation of collagen biosynthetic process"/>
    <property type="evidence" value="ECO:0000314"/>
    <property type="project" value="BHF-UCL"/>
</dbReference>
<dbReference type="GO" id="GO:0000122">
    <property type="term" value="P:negative regulation of transcription by RNA polymerase II"/>
    <property type="evidence" value="ECO:0000314"/>
    <property type="project" value="BHF-UCL"/>
</dbReference>
<dbReference type="GO" id="GO:0045345">
    <property type="term" value="P:positive regulation of MHC class I biosynthetic process"/>
    <property type="evidence" value="ECO:0000314"/>
    <property type="project" value="BHF-UCL"/>
</dbReference>
<dbReference type="GO" id="GO:0045348">
    <property type="term" value="P:positive regulation of MHC class II biosynthetic process"/>
    <property type="evidence" value="ECO:0000314"/>
    <property type="project" value="BHF-UCL"/>
</dbReference>
<dbReference type="GO" id="GO:0045944">
    <property type="term" value="P:positive regulation of transcription by RNA polymerase II"/>
    <property type="evidence" value="ECO:0000314"/>
    <property type="project" value="UniProtKB"/>
</dbReference>
<dbReference type="GO" id="GO:0046677">
    <property type="term" value="P:response to antibiotic"/>
    <property type="evidence" value="ECO:0000314"/>
    <property type="project" value="MGI"/>
</dbReference>
<dbReference type="GO" id="GO:0034341">
    <property type="term" value="P:response to type II interferon"/>
    <property type="evidence" value="ECO:0000314"/>
    <property type="project" value="UniProtKB"/>
</dbReference>
<dbReference type="GO" id="GO:0060333">
    <property type="term" value="P:type II interferon-mediated signaling pathway"/>
    <property type="evidence" value="ECO:0000314"/>
    <property type="project" value="BHF-UCL"/>
</dbReference>
<dbReference type="CDD" id="cd00116">
    <property type="entry name" value="LRR_RI"/>
    <property type="match status" value="1"/>
</dbReference>
<dbReference type="FunFam" id="3.40.50.300:FF:001028">
    <property type="entry name" value="Class II major histocompatibility complex transactivator"/>
    <property type="match status" value="1"/>
</dbReference>
<dbReference type="FunFam" id="3.80.10.10:FF:000157">
    <property type="entry name" value="Class II major histocompatibility complex transactivator"/>
    <property type="match status" value="1"/>
</dbReference>
<dbReference type="Gene3D" id="3.40.50.300">
    <property type="entry name" value="P-loop containing nucleotide triphosphate hydrolases"/>
    <property type="match status" value="1"/>
</dbReference>
<dbReference type="Gene3D" id="3.80.10.10">
    <property type="entry name" value="Ribonuclease Inhibitor"/>
    <property type="match status" value="1"/>
</dbReference>
<dbReference type="InterPro" id="IPR001611">
    <property type="entry name" value="Leu-rich_rpt"/>
</dbReference>
<dbReference type="InterPro" id="IPR032675">
    <property type="entry name" value="LRR_dom_sf"/>
</dbReference>
<dbReference type="InterPro" id="IPR008095">
    <property type="entry name" value="MHC_II_transact"/>
</dbReference>
<dbReference type="InterPro" id="IPR007111">
    <property type="entry name" value="NACHT_NTPase"/>
</dbReference>
<dbReference type="InterPro" id="IPR027417">
    <property type="entry name" value="P-loop_NTPase"/>
</dbReference>
<dbReference type="PANTHER" id="PTHR47189">
    <property type="entry name" value="MHC CLASS II TRANSACTIVATOR"/>
    <property type="match status" value="1"/>
</dbReference>
<dbReference type="PANTHER" id="PTHR47189:SF1">
    <property type="entry name" value="MHC CLASS II TRANSACTIVATOR"/>
    <property type="match status" value="1"/>
</dbReference>
<dbReference type="Pfam" id="PF13516">
    <property type="entry name" value="LRR_6"/>
    <property type="match status" value="2"/>
</dbReference>
<dbReference type="Pfam" id="PF05729">
    <property type="entry name" value="NACHT"/>
    <property type="match status" value="1"/>
</dbReference>
<dbReference type="PRINTS" id="PR01719">
    <property type="entry name" value="MHCIIACTVATR"/>
</dbReference>
<dbReference type="SMART" id="SM00368">
    <property type="entry name" value="LRR_RI"/>
    <property type="match status" value="4"/>
</dbReference>
<dbReference type="SUPFAM" id="SSF52540">
    <property type="entry name" value="P-loop containing nucleoside triphosphate hydrolases"/>
    <property type="match status" value="1"/>
</dbReference>
<dbReference type="SUPFAM" id="SSF52047">
    <property type="entry name" value="RNI-like"/>
    <property type="match status" value="1"/>
</dbReference>
<dbReference type="PROSITE" id="PS51450">
    <property type="entry name" value="LRR"/>
    <property type="match status" value="4"/>
</dbReference>
<dbReference type="PROSITE" id="PS50837">
    <property type="entry name" value="NACHT"/>
    <property type="match status" value="1"/>
</dbReference>
<proteinExistence type="evidence at protein level"/>
<sequence length="1130" mass="123415">MRCLAPRPAGSYLSEPQGSSQCATMELGPLEGGYLELLNSDADPLCLYHFYDQMDLAGEEEIELYSEPDTDTINCDQFSRLLCDMEGDEETREAYANIAELDQYVFQDSQLEGLSKDIFKHIGPDEVIGESMEMPAEVGQKSQKRPFPEELPADLKHWKPAEPPTVVTGSLLVGPVSDCSTLPCLPLPALFNQEPASGQMRLEKTDQIPMPFSSSSLSCLNLPEGPIQFVPTISTLPHGLWQISEAGTGVSSIFIYHGEVPQASQVPPPSGFTVHGLPTSPDRPGSTSPFAPSATDLPSMPEPALTSRANMTEHKTSPTQCPAAGEVSNKLPKWPEPVEQFYRSLQDTYGAEPAGPDGILVEVDLVQARLERSSSKSLERELATPDWAERQLAQGGLAEVLLAAKEHRRPRETRVIAVLGKAGQGKSYWAGAVSRAWACGRLPQYDFVFSVPCHCLNRPGDAYGLQDLLFSLGPQPLVAADEVFSHILKRPDRVLLILDGFEELEAQDGFLHSTCGPAPAEPCSLRGLLAGLFQKKLLRGCTLLLTARPRGRLVQSLSKADALFELSGFSMEQAQAYVMRYFESSGMTEHQDRALTLLRDRPLLLSHSHSPTLCRAVCQLSEALLELGEDAKLPSTLTGLYVGLLGRAALDSPPGALAELAKLAWELGRRHQSTLQEDQFPSADVRTWAMAKGLVQHPPRAAESELAFPSFLLQCFLGALWLALSGEIKDKELPQYLALTPRKKRPYDNWLEGVPRFLAGLIFQPPARCLGALLGPSAAASVDRKQKVLARYLKRLQPGTLRARQLLELLHCAHEAEEAGIWQHVVQELPGRLSFLGTRLTPPDAHVLGKALEAAGQDFSLDLRSTGICPSGLGSLVGLSCVTRFRAALSDTVALWESLQQHGETKLLQAAEEKFTIEPFKAKSLKDVEDLGKLVQTQRTRSSSEDTAGELPAVRDLKKLEFALGPVSGPQAFPKLVRILTAFSSLQHLDLDALSENKIGDEGVSQLSATFPQLKSLETLNLSQNNITDLGAYKLAEALPSLAASLLRLSLYNNCICDVGAESLARVLPDMVSLRVMDVQYNKFTAAGAQQLAASLRRCPHVETLAMWTPTIPFSVQEHLQQQDSRISLR</sequence>
<accession>P33076</accession>
<accession>A0A0B4J1S1</accession>
<accession>A0N0N9</accession>
<accession>D3DUG0</accession>
<accession>E9PFE0</accession>
<accession>Q29675</accession>
<accession>Q8SNB8</accession>
<accession>Q96KL4</accession>
<organism>
    <name type="scientific">Homo sapiens</name>
    <name type="common">Human</name>
    <dbReference type="NCBI Taxonomy" id="9606"/>
    <lineage>
        <taxon>Eukaryota</taxon>
        <taxon>Metazoa</taxon>
        <taxon>Chordata</taxon>
        <taxon>Craniata</taxon>
        <taxon>Vertebrata</taxon>
        <taxon>Euteleostomi</taxon>
        <taxon>Mammalia</taxon>
        <taxon>Eutheria</taxon>
        <taxon>Euarchontoglires</taxon>
        <taxon>Primates</taxon>
        <taxon>Haplorrhini</taxon>
        <taxon>Catarrhini</taxon>
        <taxon>Hominidae</taxon>
        <taxon>Homo</taxon>
    </lineage>
</organism>
<evidence type="ECO:0000255" key="1">
    <source>
        <dbReference type="PROSITE-ProRule" id="PRU00136"/>
    </source>
</evidence>
<evidence type="ECO:0000256" key="2">
    <source>
        <dbReference type="SAM" id="MobiDB-lite"/>
    </source>
</evidence>
<evidence type="ECO:0000269" key="3">
    <source>
    </source>
</evidence>
<evidence type="ECO:0000269" key="4">
    <source>
    </source>
</evidence>
<evidence type="ECO:0000269" key="5">
    <source>
    </source>
</evidence>
<evidence type="ECO:0000269" key="6">
    <source>
    </source>
</evidence>
<evidence type="ECO:0000269" key="7">
    <source>
    </source>
</evidence>
<evidence type="ECO:0000269" key="8">
    <source>
    </source>
</evidence>
<evidence type="ECO:0000269" key="9">
    <source>
    </source>
</evidence>
<evidence type="ECO:0000269" key="10">
    <source>
    </source>
</evidence>
<evidence type="ECO:0000269" key="11">
    <source>
    </source>
</evidence>
<evidence type="ECO:0000269" key="12">
    <source>
    </source>
</evidence>
<evidence type="ECO:0000269" key="13">
    <source>
    </source>
</evidence>
<evidence type="ECO:0000269" key="14">
    <source>
    </source>
</evidence>
<evidence type="ECO:0000269" key="15">
    <source>
    </source>
</evidence>
<evidence type="ECO:0000269" key="16">
    <source>
    </source>
</evidence>
<evidence type="ECO:0000269" key="17">
    <source>
    </source>
</evidence>
<evidence type="ECO:0000269" key="18">
    <source ref="5"/>
</evidence>
<evidence type="ECO:0000303" key="19">
    <source>
    </source>
</evidence>
<evidence type="ECO:0000303" key="20">
    <source>
    </source>
</evidence>
<evidence type="ECO:0000303" key="21">
    <source>
    </source>
</evidence>
<evidence type="ECO:0000305" key="22"/>
<evidence type="ECO:0000312" key="23">
    <source>
        <dbReference type="HGNC" id="HGNC:7067"/>
    </source>
</evidence>
<gene>
    <name evidence="23" type="primary">CIITA</name>
    <name type="synonym">MHC2TA</name>
</gene>